<reference key="1">
    <citation type="journal article" date="2009" name="Environ. Microbiol.">
        <title>Genome sequence of Desulfobacterium autotrophicum HRM2, a marine sulfate reducer oxidizing organic carbon completely to carbon dioxide.</title>
        <authorList>
            <person name="Strittmatter A.W."/>
            <person name="Liesegang H."/>
            <person name="Rabus R."/>
            <person name="Decker I."/>
            <person name="Amann J."/>
            <person name="Andres S."/>
            <person name="Henne A."/>
            <person name="Fricke W.F."/>
            <person name="Martinez-Arias R."/>
            <person name="Bartels D."/>
            <person name="Goesmann A."/>
            <person name="Krause L."/>
            <person name="Puehler A."/>
            <person name="Klenk H.P."/>
            <person name="Richter M."/>
            <person name="Schuler M."/>
            <person name="Gloeckner F.O."/>
            <person name="Meyerdierks A."/>
            <person name="Gottschalk G."/>
            <person name="Amann R."/>
        </authorList>
    </citation>
    <scope>NUCLEOTIDE SEQUENCE [LARGE SCALE GENOMIC DNA]</scope>
    <source>
        <strain>ATCC 43914 / DSM 3382 / VKM B-1955 / HRM2</strain>
    </source>
</reference>
<organism>
    <name type="scientific">Desulforapulum autotrophicum (strain ATCC 43914 / DSM 3382 / VKM B-1955 / HRM2)</name>
    <name type="common">Desulfobacterium autotrophicum</name>
    <dbReference type="NCBI Taxonomy" id="177437"/>
    <lineage>
        <taxon>Bacteria</taxon>
        <taxon>Pseudomonadati</taxon>
        <taxon>Thermodesulfobacteriota</taxon>
        <taxon>Desulfobacteria</taxon>
        <taxon>Desulfobacterales</taxon>
        <taxon>Desulfobacteraceae</taxon>
        <taxon>Desulforapulum</taxon>
    </lineage>
</organism>
<accession>C0QAX9</accession>
<sequence>MALDPTKHADWEIAQDAEKDMLTIYEIGEKLGLTKEELLPQGHYIAKIDFRAVLARLKDKPDGKYIDVTAITPTPLGEGKSTSSMGLVQGLGKLGKSVCAAIRQPSGGPTMNIKGSAAGGGLAQCIPLTPFSLGFTGDINAIMNAHNLAMVALTSRMQHERNYTDEQLERLSGMKRIDIDPTRVEMGWIMDFCCQSLRNIIIGIDGVNGKSDGYMMKSKFGIAVSSEVMAILAVAKDLKDMRERMGKIVVAYTKKGKPVTTEDLQVAGAMTAWMVDALNPSLIQTLEGQPVLVHAGPFANIAIGQSSIIADRVGLKLADYHVTESGFGADIGFEKFWNLKCRFSGLKPDCAVIVATIRALKCHGGAPVPVPGKPMPEEYNTESVEWVEKGCANLLHHIRNVRKAGISPVVCINAFYSDTDAEIAKVRELSEAEGARVALSRHWEKGGDGAIEFAETVIEACEEETEFKFLYELDMPLKERIELIAKEVYGADGVDYSNEANASLARIQADPELAKLGMCMVKTHLSLSDNPSLKGVPTGWRLMIREVLTYGGAGFIVPVAGTISLMPGTGSNPAFKRVDVDCETGKVEGVF</sequence>
<name>FTHS_DESAH</name>
<feature type="chain" id="PRO_1000215434" description="Formate--tetrahydrofolate ligase">
    <location>
        <begin position="1"/>
        <end position="591"/>
    </location>
</feature>
<feature type="binding site" evidence="1">
    <location>
        <begin position="74"/>
        <end position="81"/>
    </location>
    <ligand>
        <name>ATP</name>
        <dbReference type="ChEBI" id="CHEBI:30616"/>
    </ligand>
</feature>
<dbReference type="EC" id="6.3.4.3" evidence="1"/>
<dbReference type="EMBL" id="CP001087">
    <property type="protein sequence ID" value="ACN14778.1"/>
    <property type="molecule type" value="Genomic_DNA"/>
</dbReference>
<dbReference type="RefSeq" id="WP_015903565.1">
    <property type="nucleotide sequence ID" value="NC_012108.1"/>
</dbReference>
<dbReference type="SMR" id="C0QAX9"/>
<dbReference type="STRING" id="177437.HRM2_16700"/>
<dbReference type="KEGG" id="dat:HRM2_16700"/>
<dbReference type="eggNOG" id="COG2759">
    <property type="taxonomic scope" value="Bacteria"/>
</dbReference>
<dbReference type="HOGENOM" id="CLU_003601_3_3_7"/>
<dbReference type="OrthoDB" id="9761733at2"/>
<dbReference type="UniPathway" id="UPA00193"/>
<dbReference type="Proteomes" id="UP000000442">
    <property type="component" value="Chromosome"/>
</dbReference>
<dbReference type="GO" id="GO:0005524">
    <property type="term" value="F:ATP binding"/>
    <property type="evidence" value="ECO:0007669"/>
    <property type="project" value="UniProtKB-UniRule"/>
</dbReference>
<dbReference type="GO" id="GO:0004329">
    <property type="term" value="F:formate-tetrahydrofolate ligase activity"/>
    <property type="evidence" value="ECO:0007669"/>
    <property type="project" value="UniProtKB-UniRule"/>
</dbReference>
<dbReference type="GO" id="GO:0035999">
    <property type="term" value="P:tetrahydrofolate interconversion"/>
    <property type="evidence" value="ECO:0007669"/>
    <property type="project" value="UniProtKB-UniRule"/>
</dbReference>
<dbReference type="CDD" id="cd00477">
    <property type="entry name" value="FTHFS"/>
    <property type="match status" value="1"/>
</dbReference>
<dbReference type="Gene3D" id="3.30.1510.10">
    <property type="entry name" value="Domain 2, N(10)-formyltetrahydrofolate synthetase"/>
    <property type="match status" value="1"/>
</dbReference>
<dbReference type="Gene3D" id="3.10.410.10">
    <property type="entry name" value="Formyltetrahydrofolate synthetase, domain 3"/>
    <property type="match status" value="1"/>
</dbReference>
<dbReference type="Gene3D" id="3.40.50.300">
    <property type="entry name" value="P-loop containing nucleotide triphosphate hydrolases"/>
    <property type="match status" value="1"/>
</dbReference>
<dbReference type="HAMAP" id="MF_01543">
    <property type="entry name" value="FTHFS"/>
    <property type="match status" value="1"/>
</dbReference>
<dbReference type="InterPro" id="IPR000559">
    <property type="entry name" value="Formate_THF_ligase"/>
</dbReference>
<dbReference type="InterPro" id="IPR020628">
    <property type="entry name" value="Formate_THF_ligase_CS"/>
</dbReference>
<dbReference type="InterPro" id="IPR027417">
    <property type="entry name" value="P-loop_NTPase"/>
</dbReference>
<dbReference type="NCBIfam" id="NF010032">
    <property type="entry name" value="PRK13507.1"/>
    <property type="match status" value="1"/>
</dbReference>
<dbReference type="Pfam" id="PF01268">
    <property type="entry name" value="FTHFS"/>
    <property type="match status" value="1"/>
</dbReference>
<dbReference type="SUPFAM" id="SSF52540">
    <property type="entry name" value="P-loop containing nucleoside triphosphate hydrolases"/>
    <property type="match status" value="1"/>
</dbReference>
<dbReference type="PROSITE" id="PS00721">
    <property type="entry name" value="FTHFS_1"/>
    <property type="match status" value="1"/>
</dbReference>
<dbReference type="PROSITE" id="PS00722">
    <property type="entry name" value="FTHFS_2"/>
    <property type="match status" value="1"/>
</dbReference>
<comment type="catalytic activity">
    <reaction evidence="1">
        <text>(6S)-5,6,7,8-tetrahydrofolate + formate + ATP = (6R)-10-formyltetrahydrofolate + ADP + phosphate</text>
        <dbReference type="Rhea" id="RHEA:20221"/>
        <dbReference type="ChEBI" id="CHEBI:15740"/>
        <dbReference type="ChEBI" id="CHEBI:30616"/>
        <dbReference type="ChEBI" id="CHEBI:43474"/>
        <dbReference type="ChEBI" id="CHEBI:57453"/>
        <dbReference type="ChEBI" id="CHEBI:195366"/>
        <dbReference type="ChEBI" id="CHEBI:456216"/>
        <dbReference type="EC" id="6.3.4.3"/>
    </reaction>
</comment>
<comment type="pathway">
    <text evidence="1">One-carbon metabolism; tetrahydrofolate interconversion.</text>
</comment>
<comment type="similarity">
    <text evidence="1">Belongs to the formate--tetrahydrofolate ligase family.</text>
</comment>
<gene>
    <name evidence="1" type="primary">fhs</name>
    <name type="ordered locus">HRM2_16700</name>
</gene>
<proteinExistence type="inferred from homology"/>
<protein>
    <recommendedName>
        <fullName evidence="1">Formate--tetrahydrofolate ligase</fullName>
        <ecNumber evidence="1">6.3.4.3</ecNumber>
    </recommendedName>
    <alternativeName>
        <fullName evidence="1">Formyltetrahydrofolate synthetase</fullName>
        <shortName evidence="1">FHS</shortName>
        <shortName evidence="1">FTHFS</shortName>
    </alternativeName>
</protein>
<evidence type="ECO:0000255" key="1">
    <source>
        <dbReference type="HAMAP-Rule" id="MF_01543"/>
    </source>
</evidence>
<keyword id="KW-0067">ATP-binding</keyword>
<keyword id="KW-0436">Ligase</keyword>
<keyword id="KW-0547">Nucleotide-binding</keyword>
<keyword id="KW-0554">One-carbon metabolism</keyword>
<keyword id="KW-1185">Reference proteome</keyword>